<gene>
    <name evidence="1" type="primary">rplB</name>
    <name type="ordered locus">Dvul_1762</name>
</gene>
<comment type="function">
    <text evidence="1">One of the primary rRNA binding proteins. Required for association of the 30S and 50S subunits to form the 70S ribosome, for tRNA binding and peptide bond formation. It has been suggested to have peptidyltransferase activity; this is somewhat controversial. Makes several contacts with the 16S rRNA in the 70S ribosome.</text>
</comment>
<comment type="subunit">
    <text evidence="1">Part of the 50S ribosomal subunit. Forms a bridge to the 30S subunit in the 70S ribosome.</text>
</comment>
<comment type="similarity">
    <text evidence="1">Belongs to the universal ribosomal protein uL2 family.</text>
</comment>
<keyword id="KW-0687">Ribonucleoprotein</keyword>
<keyword id="KW-0689">Ribosomal protein</keyword>
<keyword id="KW-0694">RNA-binding</keyword>
<keyword id="KW-0699">rRNA-binding</keyword>
<dbReference type="EMBL" id="CP000527">
    <property type="protein sequence ID" value="ABM28779.1"/>
    <property type="molecule type" value="Genomic_DNA"/>
</dbReference>
<dbReference type="RefSeq" id="WP_010938601.1">
    <property type="nucleotide sequence ID" value="NC_008751.1"/>
</dbReference>
<dbReference type="SMR" id="A1VEB3"/>
<dbReference type="KEGG" id="dvl:Dvul_1762"/>
<dbReference type="HOGENOM" id="CLU_036235_2_1_7"/>
<dbReference type="Proteomes" id="UP000009173">
    <property type="component" value="Chromosome"/>
</dbReference>
<dbReference type="GO" id="GO:0015934">
    <property type="term" value="C:large ribosomal subunit"/>
    <property type="evidence" value="ECO:0007669"/>
    <property type="project" value="InterPro"/>
</dbReference>
<dbReference type="GO" id="GO:0019843">
    <property type="term" value="F:rRNA binding"/>
    <property type="evidence" value="ECO:0007669"/>
    <property type="project" value="UniProtKB-UniRule"/>
</dbReference>
<dbReference type="GO" id="GO:0003735">
    <property type="term" value="F:structural constituent of ribosome"/>
    <property type="evidence" value="ECO:0007669"/>
    <property type="project" value="InterPro"/>
</dbReference>
<dbReference type="GO" id="GO:0016740">
    <property type="term" value="F:transferase activity"/>
    <property type="evidence" value="ECO:0007669"/>
    <property type="project" value="InterPro"/>
</dbReference>
<dbReference type="GO" id="GO:0002181">
    <property type="term" value="P:cytoplasmic translation"/>
    <property type="evidence" value="ECO:0007669"/>
    <property type="project" value="TreeGrafter"/>
</dbReference>
<dbReference type="FunFam" id="2.30.30.30:FF:000001">
    <property type="entry name" value="50S ribosomal protein L2"/>
    <property type="match status" value="1"/>
</dbReference>
<dbReference type="FunFam" id="2.40.50.140:FF:000003">
    <property type="entry name" value="50S ribosomal protein L2"/>
    <property type="match status" value="1"/>
</dbReference>
<dbReference type="FunFam" id="4.10.950.10:FF:000001">
    <property type="entry name" value="50S ribosomal protein L2"/>
    <property type="match status" value="1"/>
</dbReference>
<dbReference type="Gene3D" id="2.30.30.30">
    <property type="match status" value="1"/>
</dbReference>
<dbReference type="Gene3D" id="2.40.50.140">
    <property type="entry name" value="Nucleic acid-binding proteins"/>
    <property type="match status" value="1"/>
</dbReference>
<dbReference type="Gene3D" id="4.10.950.10">
    <property type="entry name" value="Ribosomal protein L2, domain 3"/>
    <property type="match status" value="1"/>
</dbReference>
<dbReference type="HAMAP" id="MF_01320_B">
    <property type="entry name" value="Ribosomal_uL2_B"/>
    <property type="match status" value="1"/>
</dbReference>
<dbReference type="InterPro" id="IPR012340">
    <property type="entry name" value="NA-bd_OB-fold"/>
</dbReference>
<dbReference type="InterPro" id="IPR014722">
    <property type="entry name" value="Rib_uL2_dom2"/>
</dbReference>
<dbReference type="InterPro" id="IPR002171">
    <property type="entry name" value="Ribosomal_uL2"/>
</dbReference>
<dbReference type="InterPro" id="IPR005880">
    <property type="entry name" value="Ribosomal_uL2_bac/org-type"/>
</dbReference>
<dbReference type="InterPro" id="IPR022669">
    <property type="entry name" value="Ribosomal_uL2_C"/>
</dbReference>
<dbReference type="InterPro" id="IPR022671">
    <property type="entry name" value="Ribosomal_uL2_CS"/>
</dbReference>
<dbReference type="InterPro" id="IPR014726">
    <property type="entry name" value="Ribosomal_uL2_dom3"/>
</dbReference>
<dbReference type="InterPro" id="IPR022666">
    <property type="entry name" value="Ribosomal_uL2_RNA-bd_dom"/>
</dbReference>
<dbReference type="InterPro" id="IPR008991">
    <property type="entry name" value="Translation_prot_SH3-like_sf"/>
</dbReference>
<dbReference type="NCBIfam" id="TIGR01171">
    <property type="entry name" value="rplB_bact"/>
    <property type="match status" value="1"/>
</dbReference>
<dbReference type="PANTHER" id="PTHR13691:SF5">
    <property type="entry name" value="LARGE RIBOSOMAL SUBUNIT PROTEIN UL2M"/>
    <property type="match status" value="1"/>
</dbReference>
<dbReference type="PANTHER" id="PTHR13691">
    <property type="entry name" value="RIBOSOMAL PROTEIN L2"/>
    <property type="match status" value="1"/>
</dbReference>
<dbReference type="Pfam" id="PF00181">
    <property type="entry name" value="Ribosomal_L2"/>
    <property type="match status" value="1"/>
</dbReference>
<dbReference type="Pfam" id="PF03947">
    <property type="entry name" value="Ribosomal_L2_C"/>
    <property type="match status" value="1"/>
</dbReference>
<dbReference type="PIRSF" id="PIRSF002158">
    <property type="entry name" value="Ribosomal_L2"/>
    <property type="match status" value="1"/>
</dbReference>
<dbReference type="SMART" id="SM01383">
    <property type="entry name" value="Ribosomal_L2"/>
    <property type="match status" value="1"/>
</dbReference>
<dbReference type="SMART" id="SM01382">
    <property type="entry name" value="Ribosomal_L2_C"/>
    <property type="match status" value="1"/>
</dbReference>
<dbReference type="SUPFAM" id="SSF50249">
    <property type="entry name" value="Nucleic acid-binding proteins"/>
    <property type="match status" value="1"/>
</dbReference>
<dbReference type="SUPFAM" id="SSF50104">
    <property type="entry name" value="Translation proteins SH3-like domain"/>
    <property type="match status" value="1"/>
</dbReference>
<dbReference type="PROSITE" id="PS00467">
    <property type="entry name" value="RIBOSOMAL_L2"/>
    <property type="match status" value="1"/>
</dbReference>
<accession>A1VEB3</accession>
<organism>
    <name type="scientific">Nitratidesulfovibrio vulgaris (strain DP4)</name>
    <name type="common">Desulfovibrio vulgaris</name>
    <dbReference type="NCBI Taxonomy" id="391774"/>
    <lineage>
        <taxon>Bacteria</taxon>
        <taxon>Pseudomonadati</taxon>
        <taxon>Thermodesulfobacteriota</taxon>
        <taxon>Desulfovibrionia</taxon>
        <taxon>Desulfovibrionales</taxon>
        <taxon>Desulfovibrionaceae</taxon>
        <taxon>Nitratidesulfovibrio</taxon>
    </lineage>
</organism>
<feature type="chain" id="PRO_0000309910" description="Large ribosomal subunit protein uL2">
    <location>
        <begin position="1"/>
        <end position="276"/>
    </location>
</feature>
<feature type="region of interest" description="Disordered" evidence="2">
    <location>
        <begin position="222"/>
        <end position="276"/>
    </location>
</feature>
<feature type="compositionally biased region" description="Basic residues" evidence="2">
    <location>
        <begin position="259"/>
        <end position="276"/>
    </location>
</feature>
<proteinExistence type="inferred from homology"/>
<sequence length="276" mass="30148">MAVRKLKPTSPGRRFQTVSDFEEITRSTPEKSLVIGLTKKSGRNNNGRVTSRRRGGGHKRLYRIIDFRRDKAGIPAKVAHIEYDPNRTARIALLHYADGEKRYILAPVGIRQGDMILSGEGADIKPGNALPMSRIPVGTNLHNIELQPGRGGQFCRAAGTYAQLVAKEGKYALLRLPSGEVRKVLAACCATVGQVGNVNHENISLGKAGRARWLGNRPKVRGVAMNPIDHPLGGGEGRSSGGRHPVSPWGMPTKGYKTRDRKKASSKLIIKRRGQK</sequence>
<protein>
    <recommendedName>
        <fullName evidence="1">Large ribosomal subunit protein uL2</fullName>
    </recommendedName>
    <alternativeName>
        <fullName evidence="3">50S ribosomal protein L2</fullName>
    </alternativeName>
</protein>
<evidence type="ECO:0000255" key="1">
    <source>
        <dbReference type="HAMAP-Rule" id="MF_01320"/>
    </source>
</evidence>
<evidence type="ECO:0000256" key="2">
    <source>
        <dbReference type="SAM" id="MobiDB-lite"/>
    </source>
</evidence>
<evidence type="ECO:0000305" key="3"/>
<name>RL2_NITV4</name>
<reference key="1">
    <citation type="journal article" date="2009" name="Environ. Microbiol.">
        <title>Contribution of mobile genetic elements to Desulfovibrio vulgaris genome plasticity.</title>
        <authorList>
            <person name="Walker C.B."/>
            <person name="Stolyar S."/>
            <person name="Chivian D."/>
            <person name="Pinel N."/>
            <person name="Gabster J.A."/>
            <person name="Dehal P.S."/>
            <person name="He Z."/>
            <person name="Yang Z.K."/>
            <person name="Yen H.C."/>
            <person name="Zhou J."/>
            <person name="Wall J.D."/>
            <person name="Hazen T.C."/>
            <person name="Arkin A.P."/>
            <person name="Stahl D.A."/>
        </authorList>
    </citation>
    <scope>NUCLEOTIDE SEQUENCE [LARGE SCALE GENOMIC DNA]</scope>
    <source>
        <strain>DP4</strain>
    </source>
</reference>